<dbReference type="EMBL" id="CU329670">
    <property type="protein sequence ID" value="CAB16876.1"/>
    <property type="molecule type" value="Genomic_DNA"/>
</dbReference>
<dbReference type="PIR" id="T38260">
    <property type="entry name" value="T38260"/>
</dbReference>
<dbReference type="RefSeq" id="NP_593177.1">
    <property type="nucleotide sequence ID" value="NM_001018573.2"/>
</dbReference>
<dbReference type="BioGRID" id="278441">
    <property type="interactions" value="9"/>
</dbReference>
<dbReference type="STRING" id="284812.O94559"/>
<dbReference type="iPTMnet" id="O94559"/>
<dbReference type="SwissPalm" id="O94559"/>
<dbReference type="PaxDb" id="4896-SPAC23C4.05c.1"/>
<dbReference type="EnsemblFungi" id="SPAC23C4.05c.1">
    <property type="protein sequence ID" value="SPAC23C4.05c.1:pep"/>
    <property type="gene ID" value="SPAC23C4.05c"/>
</dbReference>
<dbReference type="GeneID" id="2541954"/>
<dbReference type="KEGG" id="spo:2541954"/>
<dbReference type="PomBase" id="SPAC23C4.05c">
    <property type="gene designation" value="les1"/>
</dbReference>
<dbReference type="VEuPathDB" id="FungiDB:SPAC23C4.05c"/>
<dbReference type="HOGENOM" id="CLU_636407_0_0_1"/>
<dbReference type="InParanoid" id="O94559"/>
<dbReference type="OMA" id="AKLFYMD"/>
<dbReference type="PhylomeDB" id="O94559"/>
<dbReference type="PRO" id="PR:O94559"/>
<dbReference type="Proteomes" id="UP000002485">
    <property type="component" value="Chromosome I"/>
</dbReference>
<dbReference type="GO" id="GO:0140511">
    <property type="term" value="C:mitotic nuclear bridge stalk"/>
    <property type="evidence" value="ECO:0000269"/>
    <property type="project" value="PomBase"/>
</dbReference>
<dbReference type="GO" id="GO:0005637">
    <property type="term" value="C:nuclear inner membrane"/>
    <property type="evidence" value="ECO:0000269"/>
    <property type="project" value="PomBase"/>
</dbReference>
<dbReference type="GO" id="GO:0051301">
    <property type="term" value="P:cell division"/>
    <property type="evidence" value="ECO:0007669"/>
    <property type="project" value="UniProtKB-KW"/>
</dbReference>
<dbReference type="GO" id="GO:0140515">
    <property type="term" value="P:mitotic nuclear bridge organization"/>
    <property type="evidence" value="ECO:0000315"/>
    <property type="project" value="PomBase"/>
</dbReference>
<dbReference type="GO" id="GO:1905557">
    <property type="term" value="P:regulation of mitotic nuclear envelope disassembly"/>
    <property type="evidence" value="ECO:0000315"/>
    <property type="project" value="PomBase"/>
</dbReference>
<dbReference type="InterPro" id="IPR018803">
    <property type="entry name" value="Ish1/Msc1-like"/>
</dbReference>
<dbReference type="Pfam" id="PF10281">
    <property type="entry name" value="Ish1"/>
    <property type="match status" value="1"/>
</dbReference>
<accession>O94559</accession>
<gene>
    <name evidence="3" type="primary">les1</name>
    <name type="ORF">SPAC23C4.05c</name>
</gene>
<reference key="1">
    <citation type="journal article" date="2002" name="Nature">
        <title>The genome sequence of Schizosaccharomyces pombe.</title>
        <authorList>
            <person name="Wood V."/>
            <person name="Gwilliam R."/>
            <person name="Rajandream M.A."/>
            <person name="Lyne M.H."/>
            <person name="Lyne R."/>
            <person name="Stewart A."/>
            <person name="Sgouros J.G."/>
            <person name="Peat N."/>
            <person name="Hayles J."/>
            <person name="Baker S.G."/>
            <person name="Basham D."/>
            <person name="Bowman S."/>
            <person name="Brooks K."/>
            <person name="Brown D."/>
            <person name="Brown S."/>
            <person name="Chillingworth T."/>
            <person name="Churcher C.M."/>
            <person name="Collins M."/>
            <person name="Connor R."/>
            <person name="Cronin A."/>
            <person name="Davis P."/>
            <person name="Feltwell T."/>
            <person name="Fraser A."/>
            <person name="Gentles S."/>
            <person name="Goble A."/>
            <person name="Hamlin N."/>
            <person name="Harris D.E."/>
            <person name="Hidalgo J."/>
            <person name="Hodgson G."/>
            <person name="Holroyd S."/>
            <person name="Hornsby T."/>
            <person name="Howarth S."/>
            <person name="Huckle E.J."/>
            <person name="Hunt S."/>
            <person name="Jagels K."/>
            <person name="James K.D."/>
            <person name="Jones L."/>
            <person name="Jones M."/>
            <person name="Leather S."/>
            <person name="McDonald S."/>
            <person name="McLean J."/>
            <person name="Mooney P."/>
            <person name="Moule S."/>
            <person name="Mungall K.L."/>
            <person name="Murphy L.D."/>
            <person name="Niblett D."/>
            <person name="Odell C."/>
            <person name="Oliver K."/>
            <person name="O'Neil S."/>
            <person name="Pearson D."/>
            <person name="Quail M.A."/>
            <person name="Rabbinowitsch E."/>
            <person name="Rutherford K.M."/>
            <person name="Rutter S."/>
            <person name="Saunders D."/>
            <person name="Seeger K."/>
            <person name="Sharp S."/>
            <person name="Skelton J."/>
            <person name="Simmonds M.N."/>
            <person name="Squares R."/>
            <person name="Squares S."/>
            <person name="Stevens K."/>
            <person name="Taylor K."/>
            <person name="Taylor R.G."/>
            <person name="Tivey A."/>
            <person name="Walsh S.V."/>
            <person name="Warren T."/>
            <person name="Whitehead S."/>
            <person name="Woodward J.R."/>
            <person name="Volckaert G."/>
            <person name="Aert R."/>
            <person name="Robben J."/>
            <person name="Grymonprez B."/>
            <person name="Weltjens I."/>
            <person name="Vanstreels E."/>
            <person name="Rieger M."/>
            <person name="Schaefer M."/>
            <person name="Mueller-Auer S."/>
            <person name="Gabel C."/>
            <person name="Fuchs M."/>
            <person name="Duesterhoeft A."/>
            <person name="Fritzc C."/>
            <person name="Holzer E."/>
            <person name="Moestl D."/>
            <person name="Hilbert H."/>
            <person name="Borzym K."/>
            <person name="Langer I."/>
            <person name="Beck A."/>
            <person name="Lehrach H."/>
            <person name="Reinhardt R."/>
            <person name="Pohl T.M."/>
            <person name="Eger P."/>
            <person name="Zimmermann W."/>
            <person name="Wedler H."/>
            <person name="Wambutt R."/>
            <person name="Purnelle B."/>
            <person name="Goffeau A."/>
            <person name="Cadieu E."/>
            <person name="Dreano S."/>
            <person name="Gloux S."/>
            <person name="Lelaure V."/>
            <person name="Mottier S."/>
            <person name="Galibert F."/>
            <person name="Aves S.J."/>
            <person name="Xiang Z."/>
            <person name="Hunt C."/>
            <person name="Moore K."/>
            <person name="Hurst S.M."/>
            <person name="Lucas M."/>
            <person name="Rochet M."/>
            <person name="Gaillardin C."/>
            <person name="Tallada V.A."/>
            <person name="Garzon A."/>
            <person name="Thode G."/>
            <person name="Daga R.R."/>
            <person name="Cruzado L."/>
            <person name="Jimenez J."/>
            <person name="Sanchez M."/>
            <person name="del Rey F."/>
            <person name="Benito J."/>
            <person name="Dominguez A."/>
            <person name="Revuelta J.L."/>
            <person name="Moreno S."/>
            <person name="Armstrong J."/>
            <person name="Forsburg S.L."/>
            <person name="Cerutti L."/>
            <person name="Lowe T."/>
            <person name="McCombie W.R."/>
            <person name="Paulsen I."/>
            <person name="Potashkin J."/>
            <person name="Shpakovski G.V."/>
            <person name="Ussery D."/>
            <person name="Barrell B.G."/>
            <person name="Nurse P."/>
        </authorList>
    </citation>
    <scope>NUCLEOTIDE SEQUENCE [LARGE SCALE GENOMIC DNA]</scope>
    <source>
        <strain>972 / ATCC 24843</strain>
    </source>
</reference>
<reference key="2">
    <citation type="journal article" date="2020" name="Nature">
        <title>Closed mitosis requires local disassembly of the nuclear envelope.</title>
        <authorList>
            <person name="Dey G."/>
            <person name="Culley S."/>
            <person name="Curran S."/>
            <person name="Schmidt U."/>
            <person name="Henriques R."/>
            <person name="Kukulski W."/>
            <person name="Baum B."/>
        </authorList>
    </citation>
    <scope>FUNCTION</scope>
    <scope>SUBCELLULAR LOCATION</scope>
</reference>
<name>LES1_SCHPO</name>
<proteinExistence type="inferred from homology"/>
<organism>
    <name type="scientific">Schizosaccharomyces pombe (strain 972 / ATCC 24843)</name>
    <name type="common">Fission yeast</name>
    <dbReference type="NCBI Taxonomy" id="284812"/>
    <lineage>
        <taxon>Eukaryota</taxon>
        <taxon>Fungi</taxon>
        <taxon>Dikarya</taxon>
        <taxon>Ascomycota</taxon>
        <taxon>Taphrinomycotina</taxon>
        <taxon>Schizosaccharomycetes</taxon>
        <taxon>Schizosaccharomycetales</taxon>
        <taxon>Schizosaccharomycetaceae</taxon>
        <taxon>Schizosaccharomyces</taxon>
    </lineage>
</organism>
<protein>
    <recommendedName>
        <fullName evidence="3">Nuclear bridge Ish domain protein les1</fullName>
    </recommendedName>
    <alternativeName>
        <fullName evidence="3">Lem-like enriched in stalks protein 1</fullName>
    </alternativeName>
</protein>
<sequence length="431" mass="49532">MQPRFLLHGALLALGIQLCLSIGKITGHISSIEATAADIHDAPSTTTKYVQRTVYAGREKGKIGGPADSWPQRKLDDFLQNHGVKSLDVPPIETPSQFWRKPLQYVSKVTDKCKSFYEKEKNHASHNAQKLDVWIFNSWTNSELSRWLIKNKYEVPEPGTREQLLETVFQASMGDAISTNDELESWSNNLLLSMLDQKNITVPIGASHDDLIVLARRYYDIEERKSQDKVTNITDSQPAPYMKEIIHLWSDGRLIDFLRERNIPISVLSPRETLLKEAYANRFTPRVMIASNVLDGWSSEDLLDWIWKYNKRGSIFSHVAYNSRHELIHAAKLFYMDVASEWSSSDMASLNDSLYSHPSVSKQSTWTEEELKEELESFGELVPVPFSSTKAFERLLPHLYYYLRGPAFLNRIHYWQTFLGNSLKRAFVLSQ</sequence>
<evidence type="ECO:0000255" key="1"/>
<evidence type="ECO:0000269" key="2">
    <source>
    </source>
</evidence>
<evidence type="ECO:0000303" key="3">
    <source>
    </source>
</evidence>
<feature type="signal peptide" evidence="1">
    <location>
        <begin position="1"/>
        <end position="21"/>
    </location>
</feature>
<feature type="chain" id="PRO_0000373865" description="Nuclear bridge Ish domain protein les1">
    <location>
        <begin position="22"/>
        <end position="431"/>
    </location>
</feature>
<keyword id="KW-0131">Cell cycle</keyword>
<keyword id="KW-0132">Cell division</keyword>
<keyword id="KW-0472">Membrane</keyword>
<keyword id="KW-0498">Mitosis</keyword>
<keyword id="KW-0539">Nucleus</keyword>
<keyword id="KW-1185">Reference proteome</keyword>
<keyword id="KW-0732">Signal</keyword>
<comment type="function">
    <text evidence="2">Inner nuclear envelope protein involved in nuclear fission, which is achieved via local disassembly of nuclear pores within the narrow bridge that links segregating daughter nuclei (PubMed:32848252). Les1 restricts the process of local nuclear envelope breakdown to the bridge midzone to prevent the leakage of material from daughter nuclei during mitosis (PubMed:32848252).</text>
</comment>
<comment type="subcellular location">
    <subcellularLocation>
        <location evidence="2">Nucleus inner membrane</location>
    </subcellularLocation>
    <text evidence="2">Concentrates at the stalk of each daughter nucleus during anaphase.</text>
</comment>